<gene>
    <name type="ordered locus">CGSHiEE_04235</name>
</gene>
<name>DGTL1_HAEIE</name>
<keyword id="KW-0378">Hydrolase</keyword>
<sequence length="461" mass="53375">MQKNEIKQSDMKPLIIDSSWTERFLPDPPREKDNRPPFRRDRGRILHSAAFRCLQAKTQIHAIGENDFYRTRLTHSLEVAQIGSSLVAQLKFLETFESLSQTLNIDKNELQKQLKPLLPSNDLIESLCFAHDIGHPPFGHGGETALNYMMAEQGGFEGNAQTFRILTKLEPYTENAGMNLTRRTLLGVVKYPALLDVASPQYAELNFSRNIDPRFVRIHDWIPGKGIFRDDLKMFNWLLENLSENDRTLFGKFKKVRENPAESLHTRFKSLDCSIMELADDIAYGVHDLEDAIVTGVVNPHQWQAAHSALKQIPSAWLQENIDSISQRLFSDKHFERKQAIGALVNFFITNVRWKLTANFDEPLLRYNAELSPEVIVALGVFKKFVWDYVIRNVDTQRIEYKGQRMLTEMFQIFESDPERLLPRNTANRWRNAPEERKKRIICDYIAGMSDAHALRVYQQL</sequence>
<feature type="chain" id="PRO_1000073114" description="Deoxyguanosinetriphosphate triphosphohydrolase-like protein">
    <location>
        <begin position="1"/>
        <end position="461"/>
    </location>
</feature>
<feature type="domain" description="HD" evidence="2">
    <location>
        <begin position="72"/>
        <end position="285"/>
    </location>
</feature>
<feature type="region of interest" description="Disordered" evidence="3">
    <location>
        <begin position="22"/>
        <end position="41"/>
    </location>
</feature>
<feature type="compositionally biased region" description="Basic and acidic residues" evidence="3">
    <location>
        <begin position="24"/>
        <end position="41"/>
    </location>
</feature>
<organism>
    <name type="scientific">Haemophilus influenzae (strain PittEE)</name>
    <dbReference type="NCBI Taxonomy" id="374930"/>
    <lineage>
        <taxon>Bacteria</taxon>
        <taxon>Pseudomonadati</taxon>
        <taxon>Pseudomonadota</taxon>
        <taxon>Gammaproteobacteria</taxon>
        <taxon>Pasteurellales</taxon>
        <taxon>Pasteurellaceae</taxon>
        <taxon>Haemophilus</taxon>
    </lineage>
</organism>
<protein>
    <recommendedName>
        <fullName evidence="1">Deoxyguanosinetriphosphate triphosphohydrolase-like protein</fullName>
    </recommendedName>
</protein>
<accession>A5UBV1</accession>
<reference key="1">
    <citation type="journal article" date="2007" name="Genome Biol.">
        <title>Characterization and modeling of the Haemophilus influenzae core and supragenomes based on the complete genomic sequences of Rd and 12 clinical nontypeable strains.</title>
        <authorList>
            <person name="Hogg J.S."/>
            <person name="Hu F.Z."/>
            <person name="Janto B."/>
            <person name="Boissy R."/>
            <person name="Hayes J."/>
            <person name="Keefe R."/>
            <person name="Post J.C."/>
            <person name="Ehrlich G.D."/>
        </authorList>
    </citation>
    <scope>NUCLEOTIDE SEQUENCE [LARGE SCALE GENOMIC DNA]</scope>
    <source>
        <strain>PittEE</strain>
    </source>
</reference>
<dbReference type="EMBL" id="CP000671">
    <property type="protein sequence ID" value="ABQ98252.1"/>
    <property type="molecule type" value="Genomic_DNA"/>
</dbReference>
<dbReference type="SMR" id="A5UBV1"/>
<dbReference type="KEGG" id="hip:CGSHiEE_04235"/>
<dbReference type="HOGENOM" id="CLU_028163_0_0_6"/>
<dbReference type="GO" id="GO:0008832">
    <property type="term" value="F:dGTPase activity"/>
    <property type="evidence" value="ECO:0007669"/>
    <property type="project" value="TreeGrafter"/>
</dbReference>
<dbReference type="GO" id="GO:0006203">
    <property type="term" value="P:dGTP catabolic process"/>
    <property type="evidence" value="ECO:0007669"/>
    <property type="project" value="TreeGrafter"/>
</dbReference>
<dbReference type="Gene3D" id="1.10.3210.10">
    <property type="entry name" value="Hypothetical protein af1432"/>
    <property type="match status" value="2"/>
</dbReference>
<dbReference type="HAMAP" id="MF_01212">
    <property type="entry name" value="dGTPase_type2"/>
    <property type="match status" value="1"/>
</dbReference>
<dbReference type="InterPro" id="IPR006261">
    <property type="entry name" value="dGTPase"/>
</dbReference>
<dbReference type="InterPro" id="IPR050135">
    <property type="entry name" value="dGTPase-like"/>
</dbReference>
<dbReference type="InterPro" id="IPR023023">
    <property type="entry name" value="dNTPase_2"/>
</dbReference>
<dbReference type="InterPro" id="IPR003607">
    <property type="entry name" value="HD/PDEase_dom"/>
</dbReference>
<dbReference type="InterPro" id="IPR006674">
    <property type="entry name" value="HD_domain"/>
</dbReference>
<dbReference type="InterPro" id="IPR026875">
    <property type="entry name" value="PHydrolase_assoc_dom"/>
</dbReference>
<dbReference type="NCBIfam" id="NF041026">
    <property type="entry name" value="antiphage_dGTPase"/>
    <property type="match status" value="1"/>
</dbReference>
<dbReference type="NCBIfam" id="TIGR01353">
    <property type="entry name" value="dGTP_triPase"/>
    <property type="match status" value="1"/>
</dbReference>
<dbReference type="NCBIfam" id="NF003701">
    <property type="entry name" value="PRK05318.1"/>
    <property type="match status" value="1"/>
</dbReference>
<dbReference type="PANTHER" id="PTHR11373:SF40">
    <property type="entry name" value="DEOXYGUANOSINETRIPHOSPHATE TRIPHOSPHOHYDROLASE-LIKE PROTEIN 2"/>
    <property type="match status" value="1"/>
</dbReference>
<dbReference type="PANTHER" id="PTHR11373">
    <property type="entry name" value="DEOXYNUCLEOSIDE TRIPHOSPHATE TRIPHOSPHOHYDROLASE"/>
    <property type="match status" value="1"/>
</dbReference>
<dbReference type="Pfam" id="PF01966">
    <property type="entry name" value="HD"/>
    <property type="match status" value="1"/>
</dbReference>
<dbReference type="Pfam" id="PF13286">
    <property type="entry name" value="HD_assoc"/>
    <property type="match status" value="1"/>
</dbReference>
<dbReference type="SMART" id="SM00471">
    <property type="entry name" value="HDc"/>
    <property type="match status" value="1"/>
</dbReference>
<dbReference type="SUPFAM" id="SSF109604">
    <property type="entry name" value="HD-domain/PDEase-like"/>
    <property type="match status" value="1"/>
</dbReference>
<dbReference type="PROSITE" id="PS51831">
    <property type="entry name" value="HD"/>
    <property type="match status" value="1"/>
</dbReference>
<evidence type="ECO:0000255" key="1">
    <source>
        <dbReference type="HAMAP-Rule" id="MF_01212"/>
    </source>
</evidence>
<evidence type="ECO:0000255" key="2">
    <source>
        <dbReference type="PROSITE-ProRule" id="PRU01175"/>
    </source>
</evidence>
<evidence type="ECO:0000256" key="3">
    <source>
        <dbReference type="SAM" id="MobiDB-lite"/>
    </source>
</evidence>
<comment type="similarity">
    <text evidence="1">Belongs to the dGTPase family. Type 2 subfamily.</text>
</comment>
<proteinExistence type="inferred from homology"/>